<sequence length="181" mass="20043">MSSPVSLALADFSQRFQAAWQAQHNALPSSEELADLPSPCVVESKGDEVLWRSVSLSAPVDFANVEQAIELTLHDDIKAFYGSQLSADMTATWEGNELTLLQVWNDDDFTRLQENILGHLVTQRRLKLKPTVFIAATDAELDVLSICNITGNVVLERLGTSQRDVLAENVTEFLTKLQPMV</sequence>
<feature type="chain" id="PRO_0000214150" description="Protein Syd">
    <location>
        <begin position="1"/>
        <end position="181"/>
    </location>
</feature>
<reference key="1">
    <citation type="journal article" date="2003" name="Genome Res.">
        <title>Comparative genome analysis of Vibrio vulnificus, a marine pathogen.</title>
        <authorList>
            <person name="Chen C.-Y."/>
            <person name="Wu K.-M."/>
            <person name="Chang Y.-C."/>
            <person name="Chang C.-H."/>
            <person name="Tsai H.-C."/>
            <person name="Liao T.-L."/>
            <person name="Liu Y.-M."/>
            <person name="Chen H.-J."/>
            <person name="Shen A.B.-T."/>
            <person name="Li J.-C."/>
            <person name="Su T.-L."/>
            <person name="Shao C.-P."/>
            <person name="Lee C.-T."/>
            <person name="Hor L.-I."/>
            <person name="Tsai S.-F."/>
        </authorList>
    </citation>
    <scope>NUCLEOTIDE SEQUENCE [LARGE SCALE GENOMIC DNA]</scope>
    <source>
        <strain>YJ016</strain>
    </source>
</reference>
<accession>P60156</accession>
<accession>Q7MN29</accession>
<evidence type="ECO:0000255" key="1">
    <source>
        <dbReference type="HAMAP-Rule" id="MF_01104"/>
    </source>
</evidence>
<organism>
    <name type="scientific">Vibrio vulnificus (strain YJ016)</name>
    <dbReference type="NCBI Taxonomy" id="196600"/>
    <lineage>
        <taxon>Bacteria</taxon>
        <taxon>Pseudomonadati</taxon>
        <taxon>Pseudomonadota</taxon>
        <taxon>Gammaproteobacteria</taxon>
        <taxon>Vibrionales</taxon>
        <taxon>Vibrionaceae</taxon>
        <taxon>Vibrio</taxon>
    </lineage>
</organism>
<name>SYDP_VIBVY</name>
<comment type="function">
    <text evidence="1">Interacts with the SecY protein in vivo. May bind preferentially to an uncomplexed state of SecY, thus functioning either as a chelating agent for excess SecY in the cell or as a regulatory factor that negatively controls the translocase function.</text>
</comment>
<comment type="subcellular location">
    <subcellularLocation>
        <location evidence="1">Cell inner membrane</location>
        <topology evidence="1">Peripheral membrane protein</topology>
        <orientation evidence="1">Cytoplasmic side</orientation>
    </subcellularLocation>
    <text evidence="1">Loosely associated with the cytoplasmic side of the inner membrane, probably via SecY.</text>
</comment>
<comment type="similarity">
    <text evidence="1">Belongs to the Syd family.</text>
</comment>
<proteinExistence type="inferred from homology"/>
<dbReference type="EMBL" id="BA000037">
    <property type="protein sequence ID" value="BAC93652.1"/>
    <property type="molecule type" value="Genomic_DNA"/>
</dbReference>
<dbReference type="RefSeq" id="WP_011078404.1">
    <property type="nucleotide sequence ID" value="NC_005139.1"/>
</dbReference>
<dbReference type="SMR" id="P60156"/>
<dbReference type="STRING" id="672.VV93_v1c08250"/>
<dbReference type="KEGG" id="vvy:VV0888"/>
<dbReference type="PATRIC" id="fig|196600.6.peg.892"/>
<dbReference type="eggNOG" id="ENOG502ZCMR">
    <property type="taxonomic scope" value="Bacteria"/>
</dbReference>
<dbReference type="HOGENOM" id="CLU_121866_0_0_6"/>
<dbReference type="Proteomes" id="UP000002675">
    <property type="component" value="Chromosome I"/>
</dbReference>
<dbReference type="GO" id="GO:0009898">
    <property type="term" value="C:cytoplasmic side of plasma membrane"/>
    <property type="evidence" value="ECO:0007669"/>
    <property type="project" value="InterPro"/>
</dbReference>
<dbReference type="CDD" id="cd16323">
    <property type="entry name" value="Syd"/>
    <property type="match status" value="1"/>
</dbReference>
<dbReference type="Gene3D" id="3.40.1580.20">
    <property type="entry name" value="Syd protein"/>
    <property type="match status" value="1"/>
</dbReference>
<dbReference type="HAMAP" id="MF_01104">
    <property type="entry name" value="Syd"/>
    <property type="match status" value="1"/>
</dbReference>
<dbReference type="InterPro" id="IPR009948">
    <property type="entry name" value="Syd"/>
</dbReference>
<dbReference type="InterPro" id="IPR038228">
    <property type="entry name" value="Syd_sf"/>
</dbReference>
<dbReference type="NCBIfam" id="NF003439">
    <property type="entry name" value="PRK04968.1"/>
    <property type="match status" value="1"/>
</dbReference>
<dbReference type="Pfam" id="PF07348">
    <property type="entry name" value="Syd"/>
    <property type="match status" value="1"/>
</dbReference>
<gene>
    <name evidence="1" type="primary">syd</name>
    <name type="ordered locus">VV0888</name>
</gene>
<keyword id="KW-0997">Cell inner membrane</keyword>
<keyword id="KW-1003">Cell membrane</keyword>
<keyword id="KW-0472">Membrane</keyword>
<protein>
    <recommendedName>
        <fullName evidence="1">Protein Syd</fullName>
    </recommendedName>
</protein>